<keyword id="KW-0068">Autocatalytic cleavage</keyword>
<keyword id="KW-0325">Glycoprotein</keyword>
<keyword id="KW-0378">Hydrolase</keyword>
<keyword id="KW-0645">Protease</keyword>
<keyword id="KW-1185">Reference proteome</keyword>
<keyword id="KW-0964">Secreted</keyword>
<keyword id="KW-0720">Serine protease</keyword>
<keyword id="KW-0732">Signal</keyword>
<keyword id="KW-0865">Zymogen</keyword>
<reference key="1">
    <citation type="journal article" date="1998" name="DNA Res.">
        <title>Structural analysis of Arabidopsis thaliana chromosome 5. VIII. Sequence features of the regions of 1,081,958 bp covered by seventeen physically assigned P1 and TAC clones.</title>
        <authorList>
            <person name="Asamizu E."/>
            <person name="Sato S."/>
            <person name="Kaneko T."/>
            <person name="Nakamura Y."/>
            <person name="Kotani H."/>
            <person name="Miyajima N."/>
            <person name="Tabata S."/>
        </authorList>
    </citation>
    <scope>NUCLEOTIDE SEQUENCE [LARGE SCALE GENOMIC DNA]</scope>
    <source>
        <strain>cv. Columbia</strain>
    </source>
</reference>
<reference key="2">
    <citation type="journal article" date="2017" name="Plant J.">
        <title>Araport11: a complete reannotation of the Arabidopsis thaliana reference genome.</title>
        <authorList>
            <person name="Cheng C.Y."/>
            <person name="Krishnakumar V."/>
            <person name="Chan A.P."/>
            <person name="Thibaud-Nissen F."/>
            <person name="Schobel S."/>
            <person name="Town C.D."/>
        </authorList>
    </citation>
    <scope>GENOME REANNOTATION</scope>
    <source>
        <strain>cv. Columbia</strain>
    </source>
</reference>
<reference key="3">
    <citation type="journal article" date="2005" name="PLoS Comput. Biol.">
        <title>Inferring hypotheses on functional relationships of genes: Analysis of the Arabidopsis thaliana subtilase gene family.</title>
        <authorList>
            <person name="Rautengarten C."/>
            <person name="Steinhauser D."/>
            <person name="Bussis D."/>
            <person name="Stintzi A."/>
            <person name="Schaller A."/>
            <person name="Kopka J."/>
            <person name="Altmann T."/>
        </authorList>
    </citation>
    <scope>GENE FAMILY</scope>
    <scope>NOMENCLATURE</scope>
</reference>
<gene>
    <name evidence="7" type="primary">SBT4.3</name>
    <name evidence="9" type="ordered locus">At5g59190</name>
    <name evidence="10" type="ORF">MNC17.10</name>
</gene>
<organism>
    <name type="scientific">Arabidopsis thaliana</name>
    <name type="common">Mouse-ear cress</name>
    <dbReference type="NCBI Taxonomy" id="3702"/>
    <lineage>
        <taxon>Eukaryota</taxon>
        <taxon>Viridiplantae</taxon>
        <taxon>Streptophyta</taxon>
        <taxon>Embryophyta</taxon>
        <taxon>Tracheophyta</taxon>
        <taxon>Spermatophyta</taxon>
        <taxon>Magnoliopsida</taxon>
        <taxon>eudicotyledons</taxon>
        <taxon>Gunneridae</taxon>
        <taxon>Pentapetalae</taxon>
        <taxon>rosids</taxon>
        <taxon>malvids</taxon>
        <taxon>Brassicales</taxon>
        <taxon>Brassicaceae</taxon>
        <taxon>Camelineae</taxon>
        <taxon>Arabidopsis</taxon>
    </lineage>
</organism>
<dbReference type="EC" id="3.4.21.-" evidence="6"/>
<dbReference type="EMBL" id="AB016890">
    <property type="protein sequence ID" value="BAB09764.1"/>
    <property type="molecule type" value="Genomic_DNA"/>
</dbReference>
<dbReference type="EMBL" id="CP002688">
    <property type="protein sequence ID" value="AED97155.1"/>
    <property type="status" value="ALT_SEQ"/>
    <property type="molecule type" value="Genomic_DNA"/>
</dbReference>
<dbReference type="RefSeq" id="NP_568901.1">
    <property type="nucleotide sequence ID" value="NM_125309.1"/>
</dbReference>
<dbReference type="SMR" id="Q9FIF8"/>
<dbReference type="FunCoup" id="Q9FIF8">
    <property type="interactions" value="2"/>
</dbReference>
<dbReference type="STRING" id="3702.Q9FIF8"/>
<dbReference type="MEROPS" id="S08.A09"/>
<dbReference type="GlyCosmos" id="Q9FIF8">
    <property type="glycosylation" value="8 sites, No reported glycans"/>
</dbReference>
<dbReference type="GlyGen" id="Q9FIF8">
    <property type="glycosylation" value="8 sites"/>
</dbReference>
<dbReference type="PaxDb" id="3702-AT5G59190.1"/>
<dbReference type="ProteomicsDB" id="232687"/>
<dbReference type="GeneID" id="836037"/>
<dbReference type="KEGG" id="ath:AT5G59190"/>
<dbReference type="Araport" id="AT5G59190"/>
<dbReference type="TAIR" id="AT5G59190"/>
<dbReference type="eggNOG" id="ENOG502QRA7">
    <property type="taxonomic scope" value="Eukaryota"/>
</dbReference>
<dbReference type="InParanoid" id="Q9FIF8"/>
<dbReference type="PhylomeDB" id="Q9FIF8"/>
<dbReference type="PRO" id="PR:Q9FIF8"/>
<dbReference type="Proteomes" id="UP000006548">
    <property type="component" value="Chromosome 5"/>
</dbReference>
<dbReference type="ExpressionAtlas" id="Q9FIF8">
    <property type="expression patterns" value="baseline and differential"/>
</dbReference>
<dbReference type="GO" id="GO:0005576">
    <property type="term" value="C:extracellular region"/>
    <property type="evidence" value="ECO:0007669"/>
    <property type="project" value="UniProtKB-SubCell"/>
</dbReference>
<dbReference type="GO" id="GO:0004252">
    <property type="term" value="F:serine-type endopeptidase activity"/>
    <property type="evidence" value="ECO:0007669"/>
    <property type="project" value="InterPro"/>
</dbReference>
<dbReference type="GO" id="GO:0006508">
    <property type="term" value="P:proteolysis"/>
    <property type="evidence" value="ECO:0007669"/>
    <property type="project" value="UniProtKB-KW"/>
</dbReference>
<dbReference type="GO" id="GO:0046686">
    <property type="term" value="P:response to cadmium ion"/>
    <property type="evidence" value="ECO:0000270"/>
    <property type="project" value="TAIR"/>
</dbReference>
<dbReference type="CDD" id="cd02120">
    <property type="entry name" value="PA_subtilisin_like"/>
    <property type="match status" value="1"/>
</dbReference>
<dbReference type="CDD" id="cd04852">
    <property type="entry name" value="Peptidases_S8_3"/>
    <property type="match status" value="1"/>
</dbReference>
<dbReference type="FunFam" id="3.40.50.200:FF:000006">
    <property type="entry name" value="Subtilisin-like protease SBT1.5"/>
    <property type="match status" value="1"/>
</dbReference>
<dbReference type="FunFam" id="3.50.30.30:FF:000005">
    <property type="entry name" value="subtilisin-like protease SBT1.5"/>
    <property type="match status" value="1"/>
</dbReference>
<dbReference type="FunFam" id="3.30.70.80:FF:000002">
    <property type="entry name" value="Subtilisin-like protease SBT5.3"/>
    <property type="match status" value="1"/>
</dbReference>
<dbReference type="Gene3D" id="2.60.40.2310">
    <property type="match status" value="1"/>
</dbReference>
<dbReference type="Gene3D" id="3.50.30.30">
    <property type="match status" value="1"/>
</dbReference>
<dbReference type="Gene3D" id="3.30.70.80">
    <property type="entry name" value="Peptidase S8 propeptide/proteinase inhibitor I9"/>
    <property type="match status" value="1"/>
</dbReference>
<dbReference type="Gene3D" id="3.40.50.200">
    <property type="entry name" value="Peptidase S8/S53 domain"/>
    <property type="match status" value="1"/>
</dbReference>
<dbReference type="InterPro" id="IPR000209">
    <property type="entry name" value="Peptidase_S8/S53_dom"/>
</dbReference>
<dbReference type="InterPro" id="IPR036852">
    <property type="entry name" value="Peptidase_S8/S53_dom_sf"/>
</dbReference>
<dbReference type="InterPro" id="IPR023828">
    <property type="entry name" value="Peptidase_S8_Ser-AS"/>
</dbReference>
<dbReference type="InterPro" id="IPR015500">
    <property type="entry name" value="Peptidase_S8_subtilisin-rel"/>
</dbReference>
<dbReference type="InterPro" id="IPR034197">
    <property type="entry name" value="Peptidases_S8_3"/>
</dbReference>
<dbReference type="InterPro" id="IPR010259">
    <property type="entry name" value="S8pro/Inhibitor_I9"/>
</dbReference>
<dbReference type="InterPro" id="IPR037045">
    <property type="entry name" value="S8pro/Inhibitor_I9_sf"/>
</dbReference>
<dbReference type="InterPro" id="IPR045051">
    <property type="entry name" value="SBT"/>
</dbReference>
<dbReference type="InterPro" id="IPR041469">
    <property type="entry name" value="Subtilisin-like_FN3"/>
</dbReference>
<dbReference type="PANTHER" id="PTHR10795">
    <property type="entry name" value="PROPROTEIN CONVERTASE SUBTILISIN/KEXIN"/>
    <property type="match status" value="1"/>
</dbReference>
<dbReference type="Pfam" id="PF17766">
    <property type="entry name" value="fn3_6"/>
    <property type="match status" value="1"/>
</dbReference>
<dbReference type="Pfam" id="PF05922">
    <property type="entry name" value="Inhibitor_I9"/>
    <property type="match status" value="1"/>
</dbReference>
<dbReference type="Pfam" id="PF00082">
    <property type="entry name" value="Peptidase_S8"/>
    <property type="match status" value="1"/>
</dbReference>
<dbReference type="PRINTS" id="PR00723">
    <property type="entry name" value="SUBTILISIN"/>
</dbReference>
<dbReference type="SUPFAM" id="SSF52743">
    <property type="entry name" value="Subtilisin-like"/>
    <property type="match status" value="1"/>
</dbReference>
<dbReference type="PROSITE" id="PS51892">
    <property type="entry name" value="SUBTILASE"/>
    <property type="match status" value="1"/>
</dbReference>
<dbReference type="PROSITE" id="PS00138">
    <property type="entry name" value="SUBTILASE_SER"/>
    <property type="match status" value="1"/>
</dbReference>
<sequence>MAKLSTPLYLICLAFIFTRDVSANDYRQASSVYIVYMGTLPEIKYSPPSHHLSILQKLVGTIAASHLLVRSYKRSFNGFAANLSQAESQKLQNMKEVVSVFPSKSHELTTTRSWDFVGFGEKARRESVKESDVIVGVIDSGIWPESESFDDEGFGPPPKKWKGSCKGGLKFACNNKLIGARFYNKFADSARDEEGHGTHTASTAAGNAVQAASFYGLAQGTARGGVPSARIAAYKVCFNRCNDVDILAAFDDAIADGVDVISISISADYVSNLLNASVAIGSFHAMMRGIITAGSAGNNGPDQGSVANVSPWMITVAASGTDRQFIDRVVLGNGKALTGISVNTFNLNGTKFPIVYGQNVSRNCSQAQAGYCSSGCVDSELVKGKIVLCDDFLGYREAYLAGAIGVIVQNTLLPDSAFVVPFPASSLGFEDYKSIKSYIESAEPPQAEILRTEEIVDREAPYVPSFSSRGPSFVIQNLLKPDVSAPGLEILAAFSPVASPSSFLNPEDKRSVRYSVMSGTSMACPHVAGVAAYVKSFHPDWSPSAIKSAIMTTATPMNLKKNPEQEFAYGSGQINPTKASDPGLVYEVETEDYLKMLCAEGFDSTTLTTTSGQNVTCSERTEVKDLNYPTMTTFVSSLDPFNVTFKRTVTNVGFPNSTYKASVVPLQPELQISIEPEILRFGFLEEKKSFVVTISGKELKDGSFVSSSVVWSDGSHSVRSPIVAYSIQP</sequence>
<accession>Q9FIF8</accession>
<accession>F4KHT7</accession>
<proteinExistence type="inferred from homology"/>
<comment type="subcellular location">
    <subcellularLocation>
        <location evidence="2">Secreted</location>
    </subcellularLocation>
</comment>
<comment type="PTM">
    <text evidence="1">The C-terminal propeptide is autocleaved.</text>
</comment>
<comment type="similarity">
    <text evidence="8">Belongs to the peptidase S8 family.</text>
</comment>
<comment type="sequence caution" evidence="8">
    <conflict type="erroneous gene model prediction">
        <sequence resource="EMBL-CDS" id="AED97155"/>
    </conflict>
</comment>
<name>SBT43_ARATH</name>
<evidence type="ECO:0000250" key="1">
    <source>
        <dbReference type="UniProtKB" id="Q39547"/>
    </source>
</evidence>
<evidence type="ECO:0000250" key="2">
    <source>
        <dbReference type="UniProtKB" id="Q84WS0"/>
    </source>
</evidence>
<evidence type="ECO:0000255" key="3"/>
<evidence type="ECO:0000255" key="4">
    <source>
        <dbReference type="PROSITE-ProRule" id="PRU00498"/>
    </source>
</evidence>
<evidence type="ECO:0000255" key="5">
    <source>
        <dbReference type="PROSITE-ProRule" id="PRU01240"/>
    </source>
</evidence>
<evidence type="ECO:0000255" key="6">
    <source>
        <dbReference type="PROSITE-ProRule" id="PRU10082"/>
    </source>
</evidence>
<evidence type="ECO:0000303" key="7">
    <source>
    </source>
</evidence>
<evidence type="ECO:0000305" key="8"/>
<evidence type="ECO:0000312" key="9">
    <source>
        <dbReference type="Araport" id="AT5G59190"/>
    </source>
</evidence>
<evidence type="ECO:0000312" key="10">
    <source>
        <dbReference type="EMBL" id="BAB09764.1"/>
    </source>
</evidence>
<protein>
    <recommendedName>
        <fullName evidence="7">Subtilisin-like protease SBT4.3</fullName>
        <ecNumber evidence="6">3.4.21.-</ecNumber>
    </recommendedName>
    <alternativeName>
        <fullName evidence="7">Subtilase subfamily 4 member 3</fullName>
        <shortName evidence="7">AtSBT4.3</shortName>
    </alternativeName>
</protein>
<feature type="signal peptide" evidence="3">
    <location>
        <begin position="1"/>
        <end position="23"/>
    </location>
</feature>
<feature type="propeptide" id="PRO_0000435230" description="Activation peptide" evidence="1">
    <location>
        <begin position="24"/>
        <end position="109"/>
    </location>
</feature>
<feature type="chain" id="PRO_5004325495" description="Subtilisin-like protease SBT4.3" evidence="3">
    <location>
        <begin position="110"/>
        <end status="unknown"/>
    </location>
</feature>
<feature type="propeptide" id="PRO_0000435231" evidence="1">
    <location>
        <begin status="unknown"/>
        <end position="729"/>
    </location>
</feature>
<feature type="domain" description="Inhibitor I9" evidence="3">
    <location>
        <begin position="32"/>
        <end position="108"/>
    </location>
</feature>
<feature type="domain" description="Peptidase S8" evidence="5">
    <location>
        <begin position="113"/>
        <end position="580"/>
    </location>
</feature>
<feature type="domain" description="PA" evidence="3">
    <location>
        <begin position="350"/>
        <end position="436"/>
    </location>
</feature>
<feature type="active site" description="Charge relay system" evidence="5">
    <location>
        <position position="139"/>
    </location>
</feature>
<feature type="active site" description="Charge relay system" evidence="5">
    <location>
        <position position="196"/>
    </location>
</feature>
<feature type="active site" description="Charge relay system" evidence="5">
    <location>
        <position position="521"/>
    </location>
</feature>
<feature type="glycosylation site" description="N-linked (GlcNAc...) asparagine" evidence="4">
    <location>
        <position position="82"/>
    </location>
</feature>
<feature type="glycosylation site" description="N-linked (GlcNAc...) asparagine" evidence="4">
    <location>
        <position position="275"/>
    </location>
</feature>
<feature type="glycosylation site" description="N-linked (GlcNAc...) asparagine" evidence="4">
    <location>
        <position position="348"/>
    </location>
</feature>
<feature type="glycosylation site" description="N-linked (GlcNAc...) asparagine" evidence="4">
    <location>
        <position position="359"/>
    </location>
</feature>
<feature type="glycosylation site" description="N-linked (GlcNAc...) asparagine" evidence="4">
    <location>
        <position position="363"/>
    </location>
</feature>
<feature type="glycosylation site" description="N-linked (GlcNAc...) asparagine" evidence="4">
    <location>
        <position position="614"/>
    </location>
</feature>
<feature type="glycosylation site" description="N-linked (GlcNAc...) asparagine" evidence="4">
    <location>
        <position position="642"/>
    </location>
</feature>
<feature type="glycosylation site" description="N-linked (GlcNAc...) asparagine" evidence="4">
    <location>
        <position position="656"/>
    </location>
</feature>